<evidence type="ECO:0000250" key="1"/>
<evidence type="ECO:0000250" key="2">
    <source>
        <dbReference type="UniProtKB" id="O76061"/>
    </source>
</evidence>
<evidence type="ECO:0000255" key="3"/>
<evidence type="ECO:0000256" key="4">
    <source>
        <dbReference type="SAM" id="MobiDB-lite"/>
    </source>
</evidence>
<evidence type="ECO:0000305" key="5"/>
<reference key="1">
    <citation type="journal article" date="1999" name="Horm. Metab. Res.">
        <title>Stanniocalcin 2: characterization of the protein and its localization to human pancreatic alpha cells.</title>
        <authorList>
            <person name="Moore E.E."/>
            <person name="Kuestner R.E."/>
            <person name="Conklin D.C."/>
            <person name="Whitmore T.E."/>
            <person name="Downey W."/>
            <person name="Buddle M.M."/>
            <person name="Adams R.L."/>
            <person name="Bell L.A."/>
            <person name="Thompson D.L."/>
            <person name="Wolf A."/>
            <person name="Chen L."/>
            <person name="Stamm M.R."/>
            <person name="Grant F.J."/>
            <person name="Lok S."/>
            <person name="Ren H."/>
            <person name="de Jongh K.S."/>
        </authorList>
    </citation>
    <scope>NUCLEOTIDE SEQUENCE [MRNA]</scope>
    <source>
        <tissue>Pancreatic islet</tissue>
    </source>
</reference>
<protein>
    <recommendedName>
        <fullName>Stanniocalcin-2</fullName>
        <shortName>STC-2</shortName>
    </recommendedName>
</protein>
<proteinExistence type="evidence at transcript level"/>
<dbReference type="EMBL" id="AF035377">
    <property type="protein sequence ID" value="AAD02027.1"/>
    <property type="molecule type" value="mRNA"/>
</dbReference>
<dbReference type="RefSeq" id="NP_001292852.1">
    <property type="nucleotide sequence ID" value="NM_001305923.1"/>
</dbReference>
<dbReference type="SMR" id="O97561"/>
<dbReference type="STRING" id="9545.ENSMNEP00000016124"/>
<dbReference type="GlyCosmos" id="O97561">
    <property type="glycosylation" value="1 site, No reported glycans"/>
</dbReference>
<dbReference type="Ensembl" id="ENSMNET00000040338.1">
    <property type="protein sequence ID" value="ENSMNEP00000016124.1"/>
    <property type="gene ID" value="ENSMNEG00000032109.1"/>
</dbReference>
<dbReference type="GeneID" id="105480892"/>
<dbReference type="KEGG" id="mni:105480892"/>
<dbReference type="CTD" id="8614"/>
<dbReference type="GeneTree" id="ENSGT00390000005989"/>
<dbReference type="OMA" id="HNSKATH"/>
<dbReference type="OrthoDB" id="974at314294"/>
<dbReference type="Proteomes" id="UP000233120">
    <property type="component" value="Unassembled WGS sequence"/>
</dbReference>
<dbReference type="Bgee" id="ENSMNEG00000032109">
    <property type="expression patterns" value="Expressed in spleen and 5 other cell types or tissues"/>
</dbReference>
<dbReference type="GO" id="GO:0005783">
    <property type="term" value="C:endoplasmic reticulum"/>
    <property type="evidence" value="ECO:0007669"/>
    <property type="project" value="Ensembl"/>
</dbReference>
<dbReference type="GO" id="GO:0005615">
    <property type="term" value="C:extracellular space"/>
    <property type="evidence" value="ECO:0007669"/>
    <property type="project" value="TreeGrafter"/>
</dbReference>
<dbReference type="GO" id="GO:0048471">
    <property type="term" value="C:perinuclear region of cytoplasm"/>
    <property type="evidence" value="ECO:0007669"/>
    <property type="project" value="Ensembl"/>
</dbReference>
<dbReference type="GO" id="GO:0019899">
    <property type="term" value="F:enzyme binding"/>
    <property type="evidence" value="ECO:0007669"/>
    <property type="project" value="Ensembl"/>
</dbReference>
<dbReference type="GO" id="GO:0020037">
    <property type="term" value="F:heme binding"/>
    <property type="evidence" value="ECO:0007669"/>
    <property type="project" value="Ensembl"/>
</dbReference>
<dbReference type="GO" id="GO:0005179">
    <property type="term" value="F:hormone activity"/>
    <property type="evidence" value="ECO:0007669"/>
    <property type="project" value="UniProtKB-KW"/>
</dbReference>
<dbReference type="GO" id="GO:0042803">
    <property type="term" value="F:protein homodimerization activity"/>
    <property type="evidence" value="ECO:0007669"/>
    <property type="project" value="Ensembl"/>
</dbReference>
<dbReference type="GO" id="GO:0006874">
    <property type="term" value="P:intracellular calcium ion homeostasis"/>
    <property type="evidence" value="ECO:0007669"/>
    <property type="project" value="TreeGrafter"/>
</dbReference>
<dbReference type="GO" id="GO:0010629">
    <property type="term" value="P:negative regulation of gene expression"/>
    <property type="evidence" value="ECO:0007669"/>
    <property type="project" value="Ensembl"/>
</dbReference>
<dbReference type="GO" id="GO:0046885">
    <property type="term" value="P:regulation of hormone biosynthetic process"/>
    <property type="evidence" value="ECO:0007669"/>
    <property type="project" value="Ensembl"/>
</dbReference>
<dbReference type="InterPro" id="IPR004978">
    <property type="entry name" value="Stanniocalcin"/>
</dbReference>
<dbReference type="PANTHER" id="PTHR11245">
    <property type="entry name" value="STANNIOCALCIN"/>
    <property type="match status" value="1"/>
</dbReference>
<dbReference type="PANTHER" id="PTHR11245:SF2">
    <property type="entry name" value="STANNIOCALCIN-2"/>
    <property type="match status" value="1"/>
</dbReference>
<dbReference type="Pfam" id="PF03298">
    <property type="entry name" value="Stanniocalcin"/>
    <property type="match status" value="1"/>
</dbReference>
<keyword id="KW-1015">Disulfide bond</keyword>
<keyword id="KW-0325">Glycoprotein</keyword>
<keyword id="KW-0372">Hormone</keyword>
<keyword id="KW-0597">Phosphoprotein</keyword>
<keyword id="KW-1185">Reference proteome</keyword>
<keyword id="KW-0964">Secreted</keyword>
<keyword id="KW-0732">Signal</keyword>
<name>STC2_MACNE</name>
<accession>O97561</accession>
<sequence length="302" mass="33282">MCAERLGHFMTLALVLATIDPARGTDATNPPEGPQDRSSQQKGRLSLQNTAEIQHCLVNAGDVGCGVFECFENNSCEIRGLHGICMTFLHNAGKFDAQGKSFIKDALKCKAHALRHRFGCISRKCPAIREMVFQLQRECYLKHDLCAAAQENTRVIVEMIHFKDLLLHEPYVDLVNLLLTCGEEVKEAITHSVQVQCEQNWGSLCSILSFCTSAIQRPPTAPPERQPQVDRAKLSRAHHGEAGHHLPEPSSRETGRGAKGERGSKSHPNAHARGRVGGLGAQGPSGSSEWEDEQSEYSDIRR</sequence>
<gene>
    <name type="primary">STC2</name>
</gene>
<comment type="function">
    <text>Has an anti-hypocalcemic action on calcium and phosphate homeostasis.</text>
</comment>
<comment type="subunit">
    <text evidence="1">Homodimer; disulfide-linked.</text>
</comment>
<comment type="subcellular location">
    <subcellularLocation>
        <location evidence="5">Secreted</location>
    </subcellularLocation>
</comment>
<comment type="similarity">
    <text evidence="5">Belongs to the stanniocalcin family.</text>
</comment>
<organism>
    <name type="scientific">Macaca nemestrina</name>
    <name type="common">Pig-tailed macaque</name>
    <dbReference type="NCBI Taxonomy" id="9545"/>
    <lineage>
        <taxon>Eukaryota</taxon>
        <taxon>Metazoa</taxon>
        <taxon>Chordata</taxon>
        <taxon>Craniata</taxon>
        <taxon>Vertebrata</taxon>
        <taxon>Euteleostomi</taxon>
        <taxon>Mammalia</taxon>
        <taxon>Eutheria</taxon>
        <taxon>Euarchontoglires</taxon>
        <taxon>Primates</taxon>
        <taxon>Haplorrhini</taxon>
        <taxon>Catarrhini</taxon>
        <taxon>Cercopithecidae</taxon>
        <taxon>Cercopithecinae</taxon>
        <taxon>Macaca</taxon>
    </lineage>
</organism>
<feature type="signal peptide" evidence="3">
    <location>
        <begin position="1"/>
        <end position="24"/>
    </location>
</feature>
<feature type="chain" id="PRO_0000033304" description="Stanniocalcin-2">
    <location>
        <begin position="25"/>
        <end position="302"/>
    </location>
</feature>
<feature type="region of interest" description="Disordered" evidence="4">
    <location>
        <begin position="23"/>
        <end position="44"/>
    </location>
</feature>
<feature type="region of interest" description="Disordered" evidence="4">
    <location>
        <begin position="218"/>
        <end position="302"/>
    </location>
</feature>
<feature type="compositionally biased region" description="Basic and acidic residues" evidence="4">
    <location>
        <begin position="227"/>
        <end position="264"/>
    </location>
</feature>
<feature type="modified residue" description="Phosphoserine" evidence="2">
    <location>
        <position position="250"/>
    </location>
</feature>
<feature type="modified residue" description="Phosphoserine" evidence="2">
    <location>
        <position position="251"/>
    </location>
</feature>
<feature type="modified residue" description="Phosphothreonine" evidence="2">
    <location>
        <position position="254"/>
    </location>
</feature>
<feature type="glycosylation site" description="N-linked (GlcNAc...) asparagine" evidence="3">
    <location>
        <position position="73"/>
    </location>
</feature>